<protein>
    <recommendedName>
        <fullName>Phosphocarrier protein HPr</fullName>
    </recommendedName>
    <alternativeName>
        <fullName>Histidine-containing protein</fullName>
    </alternativeName>
</protein>
<reference key="1">
    <citation type="journal article" date="2003" name="J. Bacteriol.">
        <title>Comparative analyses of the complete genome sequences of Pierce's disease and citrus variegated chlorosis strains of Xylella fastidiosa.</title>
        <authorList>
            <person name="Van Sluys M.A."/>
            <person name="de Oliveira M.C."/>
            <person name="Monteiro-Vitorello C.B."/>
            <person name="Miyaki C.Y."/>
            <person name="Furlan L.R."/>
            <person name="Camargo L.E.A."/>
            <person name="da Silva A.C.R."/>
            <person name="Moon D.H."/>
            <person name="Takita M.A."/>
            <person name="Lemos E.G.M."/>
            <person name="Machado M.A."/>
            <person name="Ferro M.I.T."/>
            <person name="da Silva F.R."/>
            <person name="Goldman M.H.S."/>
            <person name="Goldman G.H."/>
            <person name="Lemos M.V.F."/>
            <person name="El-Dorry H."/>
            <person name="Tsai S.M."/>
            <person name="Carrer H."/>
            <person name="Carraro D.M."/>
            <person name="de Oliveira R.C."/>
            <person name="Nunes L.R."/>
            <person name="Siqueira W.J."/>
            <person name="Coutinho L.L."/>
            <person name="Kimura E.T."/>
            <person name="Ferro E.S."/>
            <person name="Harakava R."/>
            <person name="Kuramae E.E."/>
            <person name="Marino C.L."/>
            <person name="Giglioti E."/>
            <person name="Abreu I.L."/>
            <person name="Alves L.M.C."/>
            <person name="do Amaral A.M."/>
            <person name="Baia G.S."/>
            <person name="Blanco S.R."/>
            <person name="Brito M.S."/>
            <person name="Cannavan F.S."/>
            <person name="Celestino A.V."/>
            <person name="da Cunha A.F."/>
            <person name="Fenille R.C."/>
            <person name="Ferro J.A."/>
            <person name="Formighieri E.F."/>
            <person name="Kishi L.T."/>
            <person name="Leoni S.G."/>
            <person name="Oliveira A.R."/>
            <person name="Rosa V.E. Jr."/>
            <person name="Sassaki F.T."/>
            <person name="Sena J.A.D."/>
            <person name="de Souza A.A."/>
            <person name="Truffi D."/>
            <person name="Tsukumo F."/>
            <person name="Yanai G.M."/>
            <person name="Zaros L.G."/>
            <person name="Civerolo E.L."/>
            <person name="Simpson A.J.G."/>
            <person name="Almeida N.F. Jr."/>
            <person name="Setubal J.C."/>
            <person name="Kitajima J.P."/>
        </authorList>
    </citation>
    <scope>NUCLEOTIDE SEQUENCE [LARGE SCALE GENOMIC DNA]</scope>
    <source>
        <strain>Temecula1 / ATCC 700964</strain>
    </source>
</reference>
<name>PTHP_XYLFT</name>
<sequence>MLEHELTVTNKLGLHARATAKLVQTMSKFQSNTTLSTKGREVNAKSIMGVMLLAASQGTVIRVRIDGEDEHTAMQALSELFENRFNEDT</sequence>
<comment type="function">
    <text evidence="1">General (non sugar-specific) component of the phosphoenolpyruvate-dependent sugar phosphotransferase system (sugar PTS). This major carbohydrate active-transport system catalyzes the phosphorylation of incoming sugar substrates concomitantly with their translocation across the cell membrane. The phosphoryl group from phosphoenolpyruvate (PEP) is transferred to the phosphoryl carrier protein HPr by enzyme I. Phospho-HPr then transfers it to the PTS EIIA domain.</text>
</comment>
<comment type="activity regulation">
    <text evidence="1">Phosphorylation on Ser-46 inhibits the phosphoryl transfer from enzyme I to HPr.</text>
</comment>
<comment type="subcellular location">
    <subcellularLocation>
        <location evidence="1">Cytoplasm</location>
    </subcellularLocation>
</comment>
<comment type="similarity">
    <text evidence="3">Belongs to the HPr family.</text>
</comment>
<feature type="chain" id="PRO_0000107889" description="Phosphocarrier protein HPr">
    <location>
        <begin position="1"/>
        <end position="89"/>
    </location>
</feature>
<feature type="domain" description="HPr" evidence="2">
    <location>
        <begin position="1"/>
        <end position="88"/>
    </location>
</feature>
<feature type="active site" description="Pros-phosphohistidine intermediate" evidence="2">
    <location>
        <position position="15"/>
    </location>
</feature>
<feature type="modified residue" description="Phosphoserine; by HPrK/P" evidence="2">
    <location>
        <position position="46"/>
    </location>
</feature>
<keyword id="KW-0963">Cytoplasm</keyword>
<keyword id="KW-0597">Phosphoprotein</keyword>
<keyword id="KW-0598">Phosphotransferase system</keyword>
<keyword id="KW-1185">Reference proteome</keyword>
<keyword id="KW-0762">Sugar transport</keyword>
<keyword id="KW-0813">Transport</keyword>
<proteinExistence type="inferred from homology"/>
<dbReference type="EMBL" id="AE009442">
    <property type="protein sequence ID" value="AAO28503.1"/>
    <property type="molecule type" value="Genomic_DNA"/>
</dbReference>
<dbReference type="RefSeq" id="WP_004089222.1">
    <property type="nucleotide sequence ID" value="NC_004556.1"/>
</dbReference>
<dbReference type="SMR" id="Q87DQ0"/>
<dbReference type="KEGG" id="xft:PD_0632"/>
<dbReference type="HOGENOM" id="CLU_136230_1_1_6"/>
<dbReference type="Proteomes" id="UP000002516">
    <property type="component" value="Chromosome"/>
</dbReference>
<dbReference type="GO" id="GO:0005737">
    <property type="term" value="C:cytoplasm"/>
    <property type="evidence" value="ECO:0007669"/>
    <property type="project" value="UniProtKB-SubCell"/>
</dbReference>
<dbReference type="GO" id="GO:0009401">
    <property type="term" value="P:phosphoenolpyruvate-dependent sugar phosphotransferase system"/>
    <property type="evidence" value="ECO:0007669"/>
    <property type="project" value="UniProtKB-KW"/>
</dbReference>
<dbReference type="CDD" id="cd00367">
    <property type="entry name" value="PTS-HPr_like"/>
    <property type="match status" value="1"/>
</dbReference>
<dbReference type="Gene3D" id="3.30.1340.10">
    <property type="entry name" value="HPr-like"/>
    <property type="match status" value="1"/>
</dbReference>
<dbReference type="InterPro" id="IPR050399">
    <property type="entry name" value="HPr"/>
</dbReference>
<dbReference type="InterPro" id="IPR000032">
    <property type="entry name" value="HPr-like"/>
</dbReference>
<dbReference type="InterPro" id="IPR035895">
    <property type="entry name" value="HPr-like_sf"/>
</dbReference>
<dbReference type="InterPro" id="IPR001020">
    <property type="entry name" value="PTS_HPr_His_P_site"/>
</dbReference>
<dbReference type="InterPro" id="IPR002114">
    <property type="entry name" value="PTS_HPr_Ser_P_site"/>
</dbReference>
<dbReference type="NCBIfam" id="TIGR01003">
    <property type="entry name" value="PTS_HPr_family"/>
    <property type="match status" value="1"/>
</dbReference>
<dbReference type="PANTHER" id="PTHR33705">
    <property type="entry name" value="PHOSPHOCARRIER PROTEIN HPR"/>
    <property type="match status" value="1"/>
</dbReference>
<dbReference type="PANTHER" id="PTHR33705:SF2">
    <property type="entry name" value="PHOSPHOCARRIER PROTEIN NPR"/>
    <property type="match status" value="1"/>
</dbReference>
<dbReference type="Pfam" id="PF00381">
    <property type="entry name" value="PTS-HPr"/>
    <property type="match status" value="1"/>
</dbReference>
<dbReference type="PRINTS" id="PR00107">
    <property type="entry name" value="PHOSPHOCPHPR"/>
</dbReference>
<dbReference type="SUPFAM" id="SSF55594">
    <property type="entry name" value="HPr-like"/>
    <property type="match status" value="1"/>
</dbReference>
<dbReference type="PROSITE" id="PS51350">
    <property type="entry name" value="PTS_HPR_DOM"/>
    <property type="match status" value="1"/>
</dbReference>
<dbReference type="PROSITE" id="PS00369">
    <property type="entry name" value="PTS_HPR_HIS"/>
    <property type="match status" value="1"/>
</dbReference>
<dbReference type="PROSITE" id="PS00589">
    <property type="entry name" value="PTS_HPR_SER"/>
    <property type="match status" value="1"/>
</dbReference>
<evidence type="ECO:0000250" key="1"/>
<evidence type="ECO:0000255" key="2">
    <source>
        <dbReference type="PROSITE-ProRule" id="PRU00681"/>
    </source>
</evidence>
<evidence type="ECO:0000305" key="3"/>
<accession>Q87DQ0</accession>
<gene>
    <name type="primary">ptsH</name>
    <name type="ordered locus">PD_0632</name>
</gene>
<organism>
    <name type="scientific">Xylella fastidiosa (strain Temecula1 / ATCC 700964)</name>
    <dbReference type="NCBI Taxonomy" id="183190"/>
    <lineage>
        <taxon>Bacteria</taxon>
        <taxon>Pseudomonadati</taxon>
        <taxon>Pseudomonadota</taxon>
        <taxon>Gammaproteobacteria</taxon>
        <taxon>Lysobacterales</taxon>
        <taxon>Lysobacteraceae</taxon>
        <taxon>Xylella</taxon>
    </lineage>
</organism>